<protein>
    <recommendedName>
        <fullName evidence="2">Bifunctional protein PyrR</fullName>
    </recommendedName>
    <domain>
        <recommendedName>
            <fullName evidence="2">Pyrimidine operon regulatory protein</fullName>
        </recommendedName>
    </domain>
    <domain>
        <recommendedName>
            <fullName evidence="2">Uracil phosphoribosyltransferase</fullName>
            <shortName evidence="2">UPRTase</shortName>
            <ecNumber evidence="2">2.4.2.9</ecNumber>
        </recommendedName>
    </domain>
</protein>
<gene>
    <name evidence="2" type="primary">pyrR</name>
    <name type="ordered locus">spyM18_0890</name>
</gene>
<feature type="chain" id="PRO_0000183069" description="Bifunctional protein PyrR">
    <location>
        <begin position="1"/>
        <end position="173"/>
    </location>
</feature>
<feature type="short sequence motif" description="PRPP-binding" evidence="2">
    <location>
        <begin position="93"/>
        <end position="105"/>
    </location>
</feature>
<feature type="binding site" evidence="1">
    <location>
        <begin position="40"/>
        <end position="41"/>
    </location>
    <ligand>
        <name>substrate</name>
    </ligand>
</feature>
<feature type="binding site" evidence="1">
    <location>
        <begin position="97"/>
        <end position="105"/>
    </location>
    <ligand>
        <name>substrate</name>
    </ligand>
</feature>
<feature type="binding site" evidence="1">
    <location>
        <position position="130"/>
    </location>
    <ligand>
        <name>substrate</name>
    </ligand>
</feature>
<organism>
    <name type="scientific">Streptococcus pyogenes serotype M18 (strain MGAS8232)</name>
    <dbReference type="NCBI Taxonomy" id="186103"/>
    <lineage>
        <taxon>Bacteria</taxon>
        <taxon>Bacillati</taxon>
        <taxon>Bacillota</taxon>
        <taxon>Bacilli</taxon>
        <taxon>Lactobacillales</taxon>
        <taxon>Streptococcaceae</taxon>
        <taxon>Streptococcus</taxon>
    </lineage>
</organism>
<evidence type="ECO:0000250" key="1"/>
<evidence type="ECO:0000255" key="2">
    <source>
        <dbReference type="HAMAP-Rule" id="MF_01219"/>
    </source>
</evidence>
<comment type="function">
    <text evidence="2">Regulates transcriptional attenuation of the pyrimidine nucleotide (pyr) operon by binding in a uridine-dependent manner to specific sites on pyr mRNA. This disrupts an antiterminator hairpin in the RNA and favors formation of a downstream transcription terminator, leading to a reduced expression of downstream genes.</text>
</comment>
<comment type="function">
    <text evidence="2">Also displays a weak uracil phosphoribosyltransferase activity which is not physiologically significant.</text>
</comment>
<comment type="catalytic activity">
    <reaction evidence="2">
        <text>UMP + diphosphate = 5-phospho-alpha-D-ribose 1-diphosphate + uracil</text>
        <dbReference type="Rhea" id="RHEA:13017"/>
        <dbReference type="ChEBI" id="CHEBI:17568"/>
        <dbReference type="ChEBI" id="CHEBI:33019"/>
        <dbReference type="ChEBI" id="CHEBI:57865"/>
        <dbReference type="ChEBI" id="CHEBI:58017"/>
        <dbReference type="EC" id="2.4.2.9"/>
    </reaction>
</comment>
<comment type="subunit">
    <text evidence="2">Homodimer and homohexamer; in equilibrium.</text>
</comment>
<comment type="similarity">
    <text evidence="2">Belongs to the purine/pyrimidine phosphoribosyltransferase family. PyrR subfamily.</text>
</comment>
<sequence length="173" mass="19517">MKTKEIVDDVTMKRAITRITYEIIERNKQLDNVVLAGIKTRGVFLARRIQERLHQLEGLDLPIGELDTKPFRDDMRVEEDTTLMSVDITGKDVILIDDVLYTGRTIRAAIDNLVSLGRPARVSLAVLVDRGHRELPIRADYVGKNIPTSSVEEIVVEVVEVDGRDRVSIIDPT</sequence>
<accession>P59013</accession>
<reference key="1">
    <citation type="journal article" date="2002" name="Proc. Natl. Acad. Sci. U.S.A.">
        <title>Genome sequence and comparative microarray analysis of serotype M18 group A Streptococcus strains associated with acute rheumatic fever outbreaks.</title>
        <authorList>
            <person name="Smoot J.C."/>
            <person name="Barbian K.D."/>
            <person name="Van Gompel J.J."/>
            <person name="Smoot L.M."/>
            <person name="Chaussee M.S."/>
            <person name="Sylva G.L."/>
            <person name="Sturdevant D.E."/>
            <person name="Ricklefs S.M."/>
            <person name="Porcella S.F."/>
            <person name="Parkins L.D."/>
            <person name="Beres S.B."/>
            <person name="Campbell D.S."/>
            <person name="Smith T.M."/>
            <person name="Zhang Q."/>
            <person name="Kapur V."/>
            <person name="Daly J.A."/>
            <person name="Veasy L.G."/>
            <person name="Musser J.M."/>
        </authorList>
    </citation>
    <scope>NUCLEOTIDE SEQUENCE [LARGE SCALE GENOMIC DNA]</scope>
    <source>
        <strain>MGAS8232</strain>
    </source>
</reference>
<dbReference type="EC" id="2.4.2.9" evidence="2"/>
<dbReference type="EMBL" id="AE009949">
    <property type="protein sequence ID" value="AAL97542.1"/>
    <property type="molecule type" value="Genomic_DNA"/>
</dbReference>
<dbReference type="RefSeq" id="WP_009881107.1">
    <property type="nucleotide sequence ID" value="NC_003485.1"/>
</dbReference>
<dbReference type="SMR" id="P59013"/>
<dbReference type="KEGG" id="spm:spyM18_0890"/>
<dbReference type="HOGENOM" id="CLU_094234_2_1_9"/>
<dbReference type="GO" id="GO:0003723">
    <property type="term" value="F:RNA binding"/>
    <property type="evidence" value="ECO:0007669"/>
    <property type="project" value="UniProtKB-UniRule"/>
</dbReference>
<dbReference type="GO" id="GO:0004845">
    <property type="term" value="F:uracil phosphoribosyltransferase activity"/>
    <property type="evidence" value="ECO:0007669"/>
    <property type="project" value="UniProtKB-UniRule"/>
</dbReference>
<dbReference type="GO" id="GO:0006353">
    <property type="term" value="P:DNA-templated transcription termination"/>
    <property type="evidence" value="ECO:0007669"/>
    <property type="project" value="UniProtKB-UniRule"/>
</dbReference>
<dbReference type="CDD" id="cd06223">
    <property type="entry name" value="PRTases_typeI"/>
    <property type="match status" value="1"/>
</dbReference>
<dbReference type="FunFam" id="3.40.50.2020:FF:000020">
    <property type="entry name" value="Bifunctional protein PyrR"/>
    <property type="match status" value="1"/>
</dbReference>
<dbReference type="Gene3D" id="3.40.50.2020">
    <property type="match status" value="1"/>
</dbReference>
<dbReference type="HAMAP" id="MF_01219">
    <property type="entry name" value="PyrR"/>
    <property type="match status" value="1"/>
</dbReference>
<dbReference type="InterPro" id="IPR000836">
    <property type="entry name" value="PRibTrfase_dom"/>
</dbReference>
<dbReference type="InterPro" id="IPR029057">
    <property type="entry name" value="PRTase-like"/>
</dbReference>
<dbReference type="InterPro" id="IPR023050">
    <property type="entry name" value="PyrR"/>
</dbReference>
<dbReference type="InterPro" id="IPR050137">
    <property type="entry name" value="PyrR_bifunctional"/>
</dbReference>
<dbReference type="NCBIfam" id="NF003548">
    <property type="entry name" value="PRK05205.1-4"/>
    <property type="match status" value="1"/>
</dbReference>
<dbReference type="NCBIfam" id="NF003549">
    <property type="entry name" value="PRK05205.1-5"/>
    <property type="match status" value="1"/>
</dbReference>
<dbReference type="PANTHER" id="PTHR11608">
    <property type="entry name" value="BIFUNCTIONAL PROTEIN PYRR"/>
    <property type="match status" value="1"/>
</dbReference>
<dbReference type="PANTHER" id="PTHR11608:SF0">
    <property type="entry name" value="BIFUNCTIONAL PROTEIN PYRR"/>
    <property type="match status" value="1"/>
</dbReference>
<dbReference type="Pfam" id="PF00156">
    <property type="entry name" value="Pribosyltran"/>
    <property type="match status" value="1"/>
</dbReference>
<dbReference type="SUPFAM" id="SSF53271">
    <property type="entry name" value="PRTase-like"/>
    <property type="match status" value="1"/>
</dbReference>
<name>PYRR_STRP8</name>
<proteinExistence type="inferred from homology"/>
<keyword id="KW-0328">Glycosyltransferase</keyword>
<keyword id="KW-0694">RNA-binding</keyword>
<keyword id="KW-0804">Transcription</keyword>
<keyword id="KW-0805">Transcription regulation</keyword>
<keyword id="KW-0806">Transcription termination</keyword>
<keyword id="KW-0808">Transferase</keyword>